<name>TRPA_PSEPF</name>
<sequence>MSRLQTRFAELKEQNRAALVTFVTAGDPDYDTSLAILKGLPKAGADVIELGMPFTDPMADGPAIQLANIRALGAKQNLTKTLQMVREFREGNSDTPLVLMGYFNPIHKFGVERFIAEAKEAGVDGLIVVDMPPEHNSELCDPAQAAGIDFIRLTTPTTDDARLPKVLNGSSGFVYYVSVAGVTGAGAATLEHVEEAVARLRRHTDLPISIGFGIRTPEQAASIARLADGVVVGSALIDHIANATTPDQAIDGVLSLCSALSEGVRKARVS</sequence>
<protein>
    <recommendedName>
        <fullName evidence="1">Tryptophan synthase alpha chain</fullName>
        <ecNumber evidence="1">4.2.1.20</ecNumber>
    </recommendedName>
</protein>
<accession>Q3KK58</accession>
<gene>
    <name evidence="1" type="primary">trpA</name>
    <name type="ordered locus">Pfl01_0104</name>
</gene>
<comment type="function">
    <text evidence="1">The alpha subunit is responsible for the aldol cleavage of indoleglycerol phosphate to indole and glyceraldehyde 3-phosphate.</text>
</comment>
<comment type="catalytic activity">
    <reaction evidence="1">
        <text>(1S,2R)-1-C-(indol-3-yl)glycerol 3-phosphate + L-serine = D-glyceraldehyde 3-phosphate + L-tryptophan + H2O</text>
        <dbReference type="Rhea" id="RHEA:10532"/>
        <dbReference type="ChEBI" id="CHEBI:15377"/>
        <dbReference type="ChEBI" id="CHEBI:33384"/>
        <dbReference type="ChEBI" id="CHEBI:57912"/>
        <dbReference type="ChEBI" id="CHEBI:58866"/>
        <dbReference type="ChEBI" id="CHEBI:59776"/>
        <dbReference type="EC" id="4.2.1.20"/>
    </reaction>
</comment>
<comment type="pathway">
    <text evidence="1">Amino-acid biosynthesis; L-tryptophan biosynthesis; L-tryptophan from chorismate: step 5/5.</text>
</comment>
<comment type="subunit">
    <text evidence="1">Tetramer of two alpha and two beta chains.</text>
</comment>
<comment type="similarity">
    <text evidence="1">Belongs to the TrpA family.</text>
</comment>
<dbReference type="EC" id="4.2.1.20" evidence="1"/>
<dbReference type="EMBL" id="CP000094">
    <property type="protein sequence ID" value="ABA71848.1"/>
    <property type="molecule type" value="Genomic_DNA"/>
</dbReference>
<dbReference type="RefSeq" id="WP_011331823.1">
    <property type="nucleotide sequence ID" value="NC_007492.2"/>
</dbReference>
<dbReference type="SMR" id="Q3KK58"/>
<dbReference type="KEGG" id="pfo:Pfl01_0104"/>
<dbReference type="eggNOG" id="COG0159">
    <property type="taxonomic scope" value="Bacteria"/>
</dbReference>
<dbReference type="HOGENOM" id="CLU_016734_0_0_6"/>
<dbReference type="UniPathway" id="UPA00035">
    <property type="reaction ID" value="UER00044"/>
</dbReference>
<dbReference type="Proteomes" id="UP000002704">
    <property type="component" value="Chromosome"/>
</dbReference>
<dbReference type="GO" id="GO:0005829">
    <property type="term" value="C:cytosol"/>
    <property type="evidence" value="ECO:0007669"/>
    <property type="project" value="TreeGrafter"/>
</dbReference>
<dbReference type="GO" id="GO:0004834">
    <property type="term" value="F:tryptophan synthase activity"/>
    <property type="evidence" value="ECO:0007669"/>
    <property type="project" value="UniProtKB-UniRule"/>
</dbReference>
<dbReference type="CDD" id="cd04724">
    <property type="entry name" value="Tryptophan_synthase_alpha"/>
    <property type="match status" value="1"/>
</dbReference>
<dbReference type="FunFam" id="3.20.20.70:FF:000037">
    <property type="entry name" value="Tryptophan synthase alpha chain"/>
    <property type="match status" value="1"/>
</dbReference>
<dbReference type="Gene3D" id="3.20.20.70">
    <property type="entry name" value="Aldolase class I"/>
    <property type="match status" value="1"/>
</dbReference>
<dbReference type="HAMAP" id="MF_00131">
    <property type="entry name" value="Trp_synth_alpha"/>
    <property type="match status" value="1"/>
</dbReference>
<dbReference type="InterPro" id="IPR013785">
    <property type="entry name" value="Aldolase_TIM"/>
</dbReference>
<dbReference type="InterPro" id="IPR011060">
    <property type="entry name" value="RibuloseP-bd_barrel"/>
</dbReference>
<dbReference type="InterPro" id="IPR018204">
    <property type="entry name" value="Trp_synthase_alpha_AS"/>
</dbReference>
<dbReference type="InterPro" id="IPR002028">
    <property type="entry name" value="Trp_synthase_suA"/>
</dbReference>
<dbReference type="NCBIfam" id="TIGR00262">
    <property type="entry name" value="trpA"/>
    <property type="match status" value="1"/>
</dbReference>
<dbReference type="PANTHER" id="PTHR43406:SF1">
    <property type="entry name" value="TRYPTOPHAN SYNTHASE ALPHA CHAIN, CHLOROPLASTIC"/>
    <property type="match status" value="1"/>
</dbReference>
<dbReference type="PANTHER" id="PTHR43406">
    <property type="entry name" value="TRYPTOPHAN SYNTHASE, ALPHA CHAIN"/>
    <property type="match status" value="1"/>
</dbReference>
<dbReference type="Pfam" id="PF00290">
    <property type="entry name" value="Trp_syntA"/>
    <property type="match status" value="1"/>
</dbReference>
<dbReference type="SUPFAM" id="SSF51366">
    <property type="entry name" value="Ribulose-phoshate binding barrel"/>
    <property type="match status" value="1"/>
</dbReference>
<dbReference type="PROSITE" id="PS00167">
    <property type="entry name" value="TRP_SYNTHASE_ALPHA"/>
    <property type="match status" value="1"/>
</dbReference>
<feature type="chain" id="PRO_1000018258" description="Tryptophan synthase alpha chain">
    <location>
        <begin position="1"/>
        <end position="270"/>
    </location>
</feature>
<feature type="active site" description="Proton acceptor" evidence="1">
    <location>
        <position position="49"/>
    </location>
</feature>
<feature type="active site" description="Proton acceptor" evidence="1">
    <location>
        <position position="60"/>
    </location>
</feature>
<evidence type="ECO:0000255" key="1">
    <source>
        <dbReference type="HAMAP-Rule" id="MF_00131"/>
    </source>
</evidence>
<reference key="1">
    <citation type="journal article" date="2009" name="Genome Biol.">
        <title>Genomic and genetic analyses of diversity and plant interactions of Pseudomonas fluorescens.</title>
        <authorList>
            <person name="Silby M.W."/>
            <person name="Cerdeno-Tarraga A.M."/>
            <person name="Vernikos G.S."/>
            <person name="Giddens S.R."/>
            <person name="Jackson R.W."/>
            <person name="Preston G.M."/>
            <person name="Zhang X.-X."/>
            <person name="Moon C.D."/>
            <person name="Gehrig S.M."/>
            <person name="Godfrey S.A.C."/>
            <person name="Knight C.G."/>
            <person name="Malone J.G."/>
            <person name="Robinson Z."/>
            <person name="Spiers A.J."/>
            <person name="Harris S."/>
            <person name="Challis G.L."/>
            <person name="Yaxley A.M."/>
            <person name="Harris D."/>
            <person name="Seeger K."/>
            <person name="Murphy L."/>
            <person name="Rutter S."/>
            <person name="Squares R."/>
            <person name="Quail M.A."/>
            <person name="Saunders E."/>
            <person name="Mavromatis K."/>
            <person name="Brettin T.S."/>
            <person name="Bentley S.D."/>
            <person name="Hothersall J."/>
            <person name="Stephens E."/>
            <person name="Thomas C.M."/>
            <person name="Parkhill J."/>
            <person name="Levy S.B."/>
            <person name="Rainey P.B."/>
            <person name="Thomson N.R."/>
        </authorList>
    </citation>
    <scope>NUCLEOTIDE SEQUENCE [LARGE SCALE GENOMIC DNA]</scope>
    <source>
        <strain>Pf0-1</strain>
    </source>
</reference>
<organism>
    <name type="scientific">Pseudomonas fluorescens (strain Pf0-1)</name>
    <dbReference type="NCBI Taxonomy" id="205922"/>
    <lineage>
        <taxon>Bacteria</taxon>
        <taxon>Pseudomonadati</taxon>
        <taxon>Pseudomonadota</taxon>
        <taxon>Gammaproteobacteria</taxon>
        <taxon>Pseudomonadales</taxon>
        <taxon>Pseudomonadaceae</taxon>
        <taxon>Pseudomonas</taxon>
    </lineage>
</organism>
<keyword id="KW-0028">Amino-acid biosynthesis</keyword>
<keyword id="KW-0057">Aromatic amino acid biosynthesis</keyword>
<keyword id="KW-0456">Lyase</keyword>
<keyword id="KW-0822">Tryptophan biosynthesis</keyword>
<proteinExistence type="inferred from homology"/>